<comment type="function">
    <text evidence="2">Catalyzes the hydrolysis of lactose to its constituent monosaccharides glucose and galactose. Possesses a low level of transgalactosylation activity for the production of galacto-oligosaccharides (GOS) from lactose.</text>
</comment>
<comment type="catalytic activity">
    <reaction evidence="2">
        <text>Hydrolysis of terminal non-reducing beta-D-galactose residues in beta-D-galactosides.</text>
        <dbReference type="EC" id="3.2.1.23"/>
    </reaction>
</comment>
<comment type="activity regulation">
    <text evidence="2">Inhibited by hydrolysis end products D-galactose and D-glucose. The hydrolysis of o-nitrophenyl-beta-D-galactopyranoside (ONPG) is slightly activated by monovalent ions, Na(+) and K(+). Concentrations of these ions in the range of 1-100 mM exert the stimulating effects. The presence of 1 mM Mn(2+) together with the presence of 10 mM Na(+) slightly stimulates the activity, while presence of 10 mM Mn(2+) inhibits the activity by about 40%.</text>
</comment>
<comment type="biophysicochemical properties">
    <kinetics>
        <KM evidence="2">13.7 mM for ONPG (at 30 degrees Celsius and pH 6.5)</KM>
        <KM evidence="2">169 mM for lactose (at 30 degrees Celsius and pH 6.5)</KM>
        <Vmax evidence="2">299.0 umol/min/mg enzyme with ONPG as substrate (at 30 degrees Celsius and pH 6.5)</Vmax>
        <Vmax evidence="2">13.0 umol/min/mg enzyme with lactose as substrate (at 30 degrees Celsius and pH 6.5)</Vmax>
    </kinetics>
    <phDependence>
        <text evidence="2">Optimum pH is 6.5 for both lactose and ONPG hydrolysis. Stable at pH 5-8 and most stable at 6.5, retaining more than 90% and 80% of its activity when incubated at pH 6.5 and 37 degrees Celsius for 5 days and 1 month, respectively.</text>
    </phDependence>
    <temperatureDependence>
        <text evidence="2">Optimum temperature of the activity is 50 degrees Celsius when using both lactose and ONPG as substrates under 10 minutes assay conditions. Stable over a wide range of temperatures (4-42 degrees Celsius), and when kept at these temperatures up to 1 month. Most stable at 37 degrees Celsius, retaining 90% of its activity after 1 month at this temperature. Half-life time of activity of approximately 7 days, 5 hours, and 30 minutes at 55, 60 and 65 degrees Celsius, respectively. Approximately 45% of lactose is hydrolyzed within the first 3 hours of the reaction at 60 degrees Celsius, while about 20% is cleaved at 37 degrees Celsius when employing initial lactose concentration of 50 g/l at pH 6.5. For initial lactose concentrations of 200 and 50 g/l and at temperature of 60 degrees Celsius, the maximum GOS yields are approximately 12% and 7%, respectively. At the initial lactose concentration of 200 g/l, the GOS yields obtained at 60 degrees Celsius are significantly higher than at 37 degrees Celsius, with approximately 12% and 5% of total sugars, respectively.</text>
    </temperatureDependence>
</comment>
<comment type="subunit">
    <text evidence="2">Homodimer.</text>
</comment>
<comment type="biotechnology">
    <text evidence="2">Has potential for partial lactose removal in food products and improving the quality of dairy products by increasing their solubility and sweetness.</text>
</comment>
<comment type="similarity">
    <text evidence="4">Belongs to the glycosyl hydrolase 42 family.</text>
</comment>
<proteinExistence type="evidence at protein level"/>
<name>BGAL2_BACLD</name>
<accession>Q65CX4</accession>
<accession>Q62NE9</accession>
<keyword id="KW-0326">Glycosidase</keyword>
<keyword id="KW-0378">Hydrolase</keyword>
<keyword id="KW-0479">Metal-binding</keyword>
<keyword id="KW-1185">Reference proteome</keyword>
<keyword id="KW-0862">Zinc</keyword>
<protein>
    <recommendedName>
        <fullName>Beta-galactosidase GalA</fullName>
        <shortName>Beta-gal</shortName>
        <ecNumber>3.2.1.23</ecNumber>
    </recommendedName>
    <alternativeName>
        <fullName>Beta-1,4-galactooligomerase</fullName>
    </alternativeName>
    <alternativeName>
        <fullName>Galactooligomerase</fullName>
    </alternativeName>
</protein>
<reference key="1">
    <citation type="journal article" date="2004" name="J. Mol. Microbiol. Biotechnol.">
        <title>The complete genome sequence of Bacillus licheniformis DSM13, an organism with great industrial potential.</title>
        <authorList>
            <person name="Veith B."/>
            <person name="Herzberg C."/>
            <person name="Steckel S."/>
            <person name="Feesche J."/>
            <person name="Maurer K.H."/>
            <person name="Ehrenreich P."/>
            <person name="Baeumer S."/>
            <person name="Henne A."/>
            <person name="Liesegang H."/>
            <person name="Merkl R."/>
            <person name="Ehrenreich A."/>
            <person name="Gottschalk G."/>
        </authorList>
    </citation>
    <scope>NUCLEOTIDE SEQUENCE [LARGE SCALE GENOMIC DNA]</scope>
    <source>
        <strain>ATCC 14580 / DSM 13 / JCM 2505 / CCUG 7422 / NBRC 12200 / NCIMB 9375 / NCTC 10341 / NRRL NRS-1264 / Gibson 46</strain>
    </source>
</reference>
<reference key="2">
    <citation type="journal article" date="2004" name="Genome Biol.">
        <title>Complete genome sequence of the industrial bacterium Bacillus licheniformis and comparisons with closely related Bacillus species.</title>
        <authorList>
            <person name="Rey M.W."/>
            <person name="Ramaiya P."/>
            <person name="Nelson B.A."/>
            <person name="Brody-Karpin S.D."/>
            <person name="Zaretsky E.J."/>
            <person name="Tang M."/>
            <person name="Lopez de Leon A."/>
            <person name="Xiang H."/>
            <person name="Gusti V."/>
            <person name="Clausen I.G."/>
            <person name="Olsen P.B."/>
            <person name="Rasmussen M.D."/>
            <person name="Andersen J.T."/>
            <person name="Joergensen P.L."/>
            <person name="Larsen T.S."/>
            <person name="Sorokin A."/>
            <person name="Bolotin A."/>
            <person name="Lapidus A."/>
            <person name="Galleron N."/>
            <person name="Ehrlich S.D."/>
            <person name="Berka R.M."/>
        </authorList>
    </citation>
    <scope>NUCLEOTIDE SEQUENCE [LARGE SCALE GENOMIC DNA]</scope>
    <source>
        <strain>ATCC 14580 / DSM 13 / JCM 2505 / CCUG 7422 / NBRC 12200 / NCIMB 9375 / NCTC 10341 / NRRL NRS-1264 / Gibson 46</strain>
    </source>
</reference>
<reference key="3">
    <citation type="journal article" date="2011" name="Appl. Microbiol. Biotechnol.">
        <title>Cloning, purification, and characterization of beta-galactosidase from Bacillus licheniformis DSM 13.</title>
        <authorList>
            <person name="Juajun O."/>
            <person name="Nguyen T.H."/>
            <person name="Maischberger T."/>
            <person name="Iqbal S."/>
            <person name="Haltrich D."/>
            <person name="Yamabhai M."/>
        </authorList>
    </citation>
    <scope>FUNCTION</scope>
    <scope>CATALYTIC ACTIVITY</scope>
    <scope>BIOPHYSICOCHEMICAL PROPERTIES</scope>
    <scope>ACTIVITY REGULATION</scope>
    <scope>SUBUNIT</scope>
    <scope>BIOTECHNOLOGY</scope>
</reference>
<feature type="chain" id="PRO_0000367027" description="Beta-galactosidase GalA">
    <location>
        <begin position="1"/>
        <end position="673"/>
    </location>
</feature>
<feature type="active site" description="Proton donor" evidence="1">
    <location>
        <position position="144"/>
    </location>
</feature>
<feature type="active site" description="Nucleophile" evidence="1">
    <location>
        <position position="308"/>
    </location>
</feature>
<feature type="binding site" evidence="1">
    <location>
        <position position="105"/>
    </location>
    <ligand>
        <name>substrate</name>
    </ligand>
</feature>
<feature type="binding site" evidence="1">
    <location>
        <position position="109"/>
    </location>
    <ligand>
        <name>Zn(2+)</name>
        <dbReference type="ChEBI" id="CHEBI:29105"/>
    </ligand>
</feature>
<feature type="binding site" evidence="1">
    <location>
        <position position="143"/>
    </location>
    <ligand>
        <name>substrate</name>
    </ligand>
</feature>
<feature type="binding site" evidence="1">
    <location>
        <position position="149"/>
    </location>
    <ligand>
        <name>Zn(2+)</name>
        <dbReference type="ChEBI" id="CHEBI:29105"/>
    </ligand>
</feature>
<feature type="binding site" evidence="1">
    <location>
        <position position="151"/>
    </location>
    <ligand>
        <name>Zn(2+)</name>
        <dbReference type="ChEBI" id="CHEBI:29105"/>
    </ligand>
</feature>
<feature type="binding site" evidence="1">
    <location>
        <position position="154"/>
    </location>
    <ligand>
        <name>Zn(2+)</name>
        <dbReference type="ChEBI" id="CHEBI:29105"/>
    </ligand>
</feature>
<feature type="binding site" evidence="1">
    <location>
        <position position="316"/>
    </location>
    <ligand>
        <name>substrate</name>
    </ligand>
</feature>
<feature type="binding site" evidence="1">
    <location>
        <begin position="356"/>
        <end position="359"/>
    </location>
    <ligand>
        <name>substrate</name>
    </ligand>
</feature>
<gene>
    <name evidence="3" type="primary">lacA</name>
    <name type="synonym">galO</name>
    <name type="synonym">ganA</name>
    <name type="ordered locus">BLi04277</name>
    <name type="ordered locus">BL00264</name>
</gene>
<dbReference type="EC" id="3.2.1.23"/>
<dbReference type="EMBL" id="CP000002">
    <property type="protein sequence ID" value="AAU25712.1"/>
    <property type="molecule type" value="Genomic_DNA"/>
</dbReference>
<dbReference type="EMBL" id="AE017333">
    <property type="protein sequence ID" value="AAU43090.1"/>
    <property type="molecule type" value="Genomic_DNA"/>
</dbReference>
<dbReference type="SMR" id="Q65CX4"/>
<dbReference type="STRING" id="279010.BL00264"/>
<dbReference type="CAZy" id="GH42">
    <property type="family name" value="Glycoside Hydrolase Family 42"/>
</dbReference>
<dbReference type="KEGG" id="bld:BLi04277"/>
<dbReference type="KEGG" id="bli:BL00264"/>
<dbReference type="eggNOG" id="COG1874">
    <property type="taxonomic scope" value="Bacteria"/>
</dbReference>
<dbReference type="HOGENOM" id="CLU_012430_1_1_9"/>
<dbReference type="Proteomes" id="UP000000606">
    <property type="component" value="Chromosome"/>
</dbReference>
<dbReference type="GO" id="GO:0009341">
    <property type="term" value="C:beta-galactosidase complex"/>
    <property type="evidence" value="ECO:0007669"/>
    <property type="project" value="InterPro"/>
</dbReference>
<dbReference type="GO" id="GO:0004565">
    <property type="term" value="F:beta-galactosidase activity"/>
    <property type="evidence" value="ECO:0007669"/>
    <property type="project" value="UniProtKB-EC"/>
</dbReference>
<dbReference type="GO" id="GO:0046872">
    <property type="term" value="F:metal ion binding"/>
    <property type="evidence" value="ECO:0007669"/>
    <property type="project" value="UniProtKB-KW"/>
</dbReference>
<dbReference type="GO" id="GO:0006012">
    <property type="term" value="P:galactose metabolic process"/>
    <property type="evidence" value="ECO:0007669"/>
    <property type="project" value="InterPro"/>
</dbReference>
<dbReference type="CDD" id="cd03143">
    <property type="entry name" value="A4_beta-galactosidase_middle_domain"/>
    <property type="match status" value="1"/>
</dbReference>
<dbReference type="Gene3D" id="3.40.50.880">
    <property type="match status" value="1"/>
</dbReference>
<dbReference type="Gene3D" id="3.20.20.80">
    <property type="entry name" value="Glycosidases"/>
    <property type="match status" value="1"/>
</dbReference>
<dbReference type="Gene3D" id="2.60.40.1180">
    <property type="entry name" value="Golgi alpha-mannosidase II"/>
    <property type="match status" value="1"/>
</dbReference>
<dbReference type="InterPro" id="IPR013739">
    <property type="entry name" value="Beta_galactosidase_C"/>
</dbReference>
<dbReference type="InterPro" id="IPR013738">
    <property type="entry name" value="Beta_galactosidase_Trimer"/>
</dbReference>
<dbReference type="InterPro" id="IPR029062">
    <property type="entry name" value="Class_I_gatase-like"/>
</dbReference>
<dbReference type="InterPro" id="IPR003476">
    <property type="entry name" value="Glyco_hydro_42"/>
</dbReference>
<dbReference type="InterPro" id="IPR013529">
    <property type="entry name" value="Glyco_hydro_42_N"/>
</dbReference>
<dbReference type="InterPro" id="IPR013780">
    <property type="entry name" value="Glyco_hydro_b"/>
</dbReference>
<dbReference type="InterPro" id="IPR017853">
    <property type="entry name" value="Glycoside_hydrolase_SF"/>
</dbReference>
<dbReference type="PANTHER" id="PTHR36447">
    <property type="entry name" value="BETA-GALACTOSIDASE GANA"/>
    <property type="match status" value="1"/>
</dbReference>
<dbReference type="PANTHER" id="PTHR36447:SF1">
    <property type="entry name" value="BETA-GALACTOSIDASE GANA"/>
    <property type="match status" value="1"/>
</dbReference>
<dbReference type="Pfam" id="PF02449">
    <property type="entry name" value="Glyco_hydro_42"/>
    <property type="match status" value="1"/>
</dbReference>
<dbReference type="Pfam" id="PF08533">
    <property type="entry name" value="Glyco_hydro_42C"/>
    <property type="match status" value="1"/>
</dbReference>
<dbReference type="Pfam" id="PF08532">
    <property type="entry name" value="Glyco_hydro_42M"/>
    <property type="match status" value="1"/>
</dbReference>
<dbReference type="PIRSF" id="PIRSF001084">
    <property type="entry name" value="B-galactosidase"/>
    <property type="match status" value="1"/>
</dbReference>
<dbReference type="SUPFAM" id="SSF51445">
    <property type="entry name" value="(Trans)glycosidases"/>
    <property type="match status" value="1"/>
</dbReference>
<dbReference type="SUPFAM" id="SSF52317">
    <property type="entry name" value="Class I glutamine amidotransferase-like"/>
    <property type="match status" value="1"/>
</dbReference>
<organism>
    <name type="scientific">Bacillus licheniformis (strain ATCC 14580 / DSM 13 / JCM 2505 / CCUG 7422 / NBRC 12200 / NCIMB 9375 / NCTC 10341 / NRRL NRS-1264 / Gibson 46)</name>
    <dbReference type="NCBI Taxonomy" id="279010"/>
    <lineage>
        <taxon>Bacteria</taxon>
        <taxon>Bacillati</taxon>
        <taxon>Bacillota</taxon>
        <taxon>Bacilli</taxon>
        <taxon>Bacillales</taxon>
        <taxon>Bacillaceae</taxon>
        <taxon>Bacillus</taxon>
    </lineage>
</organism>
<sequence>MLHGGDYNPDQWLDRPDILADDIKLMKLAHTNTFSVGIFSWSALEPEEGVYTFEWLDDIFESIHRNGGRIILATPSGARPAWLSQKYPEVLRVNAERVKQLHGGRHNHCFTSYVYREKTKEINRMLAERYGSQHALLMWHVSNEYGGECHCDQCQHAFRDWLKKKYNHDIKSLNDAWWTPFWSHTFNDWSQIESPSPIGENAVHGLNLDWRRFVTDQTISFFQNEIVPLKEITPNIPITTNFMADTHDLIPFQGLDYSKFAKHLDVISWDAYPAWHNDWESTADLAMKVGFINDLYRSLKQQPFLLMESTPSAVNWHDFNKAKRPGMHLLSSVQMIAHGSDSILYFQWRKSRGSSEKFHGAVVGHDNCSENRVFKEVAKVGQTLEALSEVTGTIRPADVAILYDWENHWALQDAQGFGMKTKRYPQTLHEHYRAFWERDIPVDVITKEQDFSSYRLLIVPMLYLASEETIARLKAFAANGGTLVMTYISGIVNESDLTYLGGWPKDLQEMFGMEPVETDTLYPGDKNAVRYQNRSYELKDYATVLKLSTADPEGFYEDDFYADTTAVTSHPYKQGKTYYIGARLSSQFHRDFYGTLIKELAIQPALDVKHQPGVSVQVRQDEENDYIFIMNFTEKRQPVVLASAVKDMLTGETLAGEVTLEKYEARIAVKAKE</sequence>
<evidence type="ECO:0000250" key="1"/>
<evidence type="ECO:0000269" key="2">
    <source>
    </source>
</evidence>
<evidence type="ECO:0000303" key="3">
    <source>
    </source>
</evidence>
<evidence type="ECO:0000305" key="4"/>